<reference key="1">
    <citation type="submission" date="1996-01" db="EMBL/GenBank/DDBJ databases">
        <title>Complete nucleotide sequence of microcin 24 genetic region and analysis of a new ABC transporter.</title>
        <authorList>
            <person name="O'Brien G.J."/>
            <person name="Mahanty H.K."/>
        </authorList>
    </citation>
    <scope>NUCLEOTIDE SEQUENCE [GENOMIC DNA]</scope>
    <source>
        <strain>2424</strain>
    </source>
</reference>
<reference key="2">
    <citation type="journal article" date="2010" name="FEMS Microbiol. Lett.">
        <title>Purification and characterization of the antimicrobial peptide microcin N.</title>
        <authorList>
            <person name="Corsini G."/>
            <person name="Karahanian E."/>
            <person name="Tello M."/>
            <person name="Fernandez K."/>
            <person name="Rivero D."/>
            <person name="Saavedra J.M."/>
            <person name="Ferrer A."/>
        </authorList>
    </citation>
    <scope>NUCLEOTIDE SEQUENCE [GENOMIC DNA]</scope>
    <scope>NOMENCLATURE</scope>
    <source>
        <strain>2424</strain>
    </source>
</reference>
<reference key="3">
    <citation type="journal article" date="1994" name="Plasmid">
        <title>Colicin 24, a new plasmid-borne colicin from a uropathogenic strain of Escherichia coli.</title>
        <authorList>
            <person name="O'Brien G.J."/>
            <person name="Mahanty H.K."/>
        </authorList>
    </citation>
    <scope>IDENTIFICATION</scope>
    <scope>FUNCTION</scope>
    <source>
        <strain>2424</strain>
        <plasmid>p24-2</plasmid>
    </source>
</reference>
<organism>
    <name type="scientific">Escherichia coli</name>
    <dbReference type="NCBI Taxonomy" id="562"/>
    <lineage>
        <taxon>Bacteria</taxon>
        <taxon>Pseudomonadati</taxon>
        <taxon>Pseudomonadota</taxon>
        <taxon>Gammaproteobacteria</taxon>
        <taxon>Enterobacterales</taxon>
        <taxon>Enterobacteriaceae</taxon>
        <taxon>Escherichia</taxon>
    </lineage>
</organism>
<proteinExistence type="inferred from homology"/>
<sequence length="93" mass="11426">MSFLNFAFSPVFFSIMACYFIVWRNKRNEFVCNRLLSIIIISFLICFIYPWLNYKIEVKYYIFEQFYLFCFLSSLVAVVINLIVYFILYRRCI</sequence>
<keyword id="KW-0079">Bacteriocin immunity</keyword>
<keyword id="KW-0997">Cell inner membrane</keyword>
<keyword id="KW-1003">Cell membrane</keyword>
<keyword id="KW-0472">Membrane</keyword>
<keyword id="KW-0614">Plasmid</keyword>
<keyword id="KW-0812">Transmembrane</keyword>
<keyword id="KW-1133">Transmembrane helix</keyword>
<feature type="chain" id="PRO_0000218714" description="Microcin N immunity protein">
    <location>
        <begin position="1"/>
        <end position="93"/>
    </location>
</feature>
<feature type="transmembrane region" description="Helical" evidence="2">
    <location>
        <begin position="3"/>
        <end position="23"/>
    </location>
</feature>
<feature type="transmembrane region" description="Helical" evidence="2">
    <location>
        <begin position="36"/>
        <end position="56"/>
    </location>
</feature>
<feature type="transmembrane region" description="Helical" evidence="2">
    <location>
        <begin position="68"/>
        <end position="88"/>
    </location>
</feature>
<geneLocation type="plasmid" evidence="4">
    <name>p24-2</name>
</geneLocation>
<accession>Q46970</accession>
<accession>C3VUZ4</accession>
<gene>
    <name evidence="3" type="primary">mcnI</name>
    <name evidence="5" type="synonym">mtfI</name>
</gene>
<protein>
    <recommendedName>
        <fullName evidence="3">Microcin N immunity protein</fullName>
    </recommendedName>
    <alternativeName>
        <fullName evidence="5">Microcin-24 immunity protein</fullName>
    </alternativeName>
</protein>
<comment type="function">
    <text evidence="7">Probably able to protect the producing cell against microcin N (microcin 24).</text>
</comment>
<comment type="subcellular location">
    <subcellularLocation>
        <location evidence="1">Cell inner membrane</location>
        <topology evidence="1">Multi-pass membrane protein</topology>
    </subcellularLocation>
</comment>
<comment type="similarity">
    <text evidence="6">Belongs to the MceB microcin immunity protein family.</text>
</comment>
<comment type="sequence caution" evidence="6">
    <conflict type="erroneous initiation">
        <sequence resource="EMBL-CDS" id="ACP43449"/>
    </conflict>
    <text>Extended N-terminus.</text>
</comment>
<name>MCNI_ECOLX</name>
<dbReference type="EMBL" id="U47048">
    <property type="protein sequence ID" value="AAA88771.1"/>
    <property type="molecule type" value="Genomic_DNA"/>
</dbReference>
<dbReference type="EMBL" id="FJ895580">
    <property type="protein sequence ID" value="ACP43449.1"/>
    <property type="status" value="ALT_INIT"/>
    <property type="molecule type" value="Genomic_DNA"/>
</dbReference>
<dbReference type="SMR" id="Q46970"/>
<dbReference type="GO" id="GO:0005886">
    <property type="term" value="C:plasma membrane"/>
    <property type="evidence" value="ECO:0007669"/>
    <property type="project" value="UniProtKB-SubCell"/>
</dbReference>
<dbReference type="GO" id="GO:0030153">
    <property type="term" value="P:bacteriocin immunity"/>
    <property type="evidence" value="ECO:0007669"/>
    <property type="project" value="UniProtKB-KW"/>
</dbReference>
<evidence type="ECO:0000250" key="1"/>
<evidence type="ECO:0000255" key="2"/>
<evidence type="ECO:0000303" key="3">
    <source>
    </source>
</evidence>
<evidence type="ECO:0000303" key="4">
    <source>
    </source>
</evidence>
<evidence type="ECO:0000303" key="5">
    <source ref="1"/>
</evidence>
<evidence type="ECO:0000305" key="6"/>
<evidence type="ECO:0000305" key="7">
    <source>
    </source>
</evidence>